<gene>
    <name evidence="1" type="primary">rplP</name>
    <name type="ordered locus">MCAP_0689</name>
</gene>
<name>RL16_MYCCT</name>
<accession>P02415</accession>
<accession>Q2SRG0</accession>
<evidence type="ECO:0000255" key="1">
    <source>
        <dbReference type="HAMAP-Rule" id="MF_01342"/>
    </source>
</evidence>
<evidence type="ECO:0000305" key="2"/>
<keyword id="KW-0687">Ribonucleoprotein</keyword>
<keyword id="KW-0689">Ribosomal protein</keyword>
<keyword id="KW-0694">RNA-binding</keyword>
<keyword id="KW-0699">rRNA-binding</keyword>
<keyword id="KW-0820">tRNA-binding</keyword>
<protein>
    <recommendedName>
        <fullName evidence="1">Large ribosomal subunit protein uL16</fullName>
    </recommendedName>
    <alternativeName>
        <fullName evidence="2">50S ribosomal protein L16</fullName>
    </alternativeName>
</protein>
<feature type="chain" id="PRO_0000062139" description="Large ribosomal subunit protein uL16">
    <location>
        <begin position="1"/>
        <end position="137"/>
    </location>
</feature>
<organism>
    <name type="scientific">Mycoplasma capricolum subsp. capricolum (strain California kid / ATCC 27343 / NCTC 10154)</name>
    <dbReference type="NCBI Taxonomy" id="340047"/>
    <lineage>
        <taxon>Bacteria</taxon>
        <taxon>Bacillati</taxon>
        <taxon>Mycoplasmatota</taxon>
        <taxon>Mollicutes</taxon>
        <taxon>Mycoplasmataceae</taxon>
        <taxon>Mycoplasma</taxon>
    </lineage>
</organism>
<reference key="1">
    <citation type="journal article" date="1987" name="Mol. Gen. Genet.">
        <title>The ribosomal protein gene cluster of Mycoplasma capricolum.</title>
        <authorList>
            <person name="Ohkubo S."/>
            <person name="Muto A."/>
            <person name="Kawauchi Y."/>
            <person name="Yamao F."/>
            <person name="Osawa S."/>
        </authorList>
    </citation>
    <scope>NUCLEOTIDE SEQUENCE [GENOMIC DNA]</scope>
</reference>
<reference key="2">
    <citation type="journal article" date="1995" name="Mol. Microbiol.">
        <title>Exploring the Mycoplasma capricolum genome: a minimal cell reveals its physiology.</title>
        <authorList>
            <person name="Bork P."/>
            <person name="Ouzounis C."/>
            <person name="Casari G."/>
            <person name="Schneider R."/>
            <person name="Sander C."/>
            <person name="Dolan M."/>
            <person name="Gilbert W."/>
            <person name="Gillevet P.M."/>
        </authorList>
    </citation>
    <scope>NUCLEOTIDE SEQUENCE [GENOMIC DNA]</scope>
</reference>
<reference key="3">
    <citation type="submission" date="2005-09" db="EMBL/GenBank/DDBJ databases">
        <authorList>
            <person name="Glass J.I."/>
            <person name="Lartigue C."/>
            <person name="Pfannkoch C."/>
            <person name="Baden-Tillson H."/>
            <person name="Smith H.O."/>
            <person name="Venter J.C."/>
            <person name="Roske K."/>
            <person name="Wise K.S."/>
            <person name="Calcutt M.J."/>
            <person name="Nelson W.C."/>
            <person name="Nierman W.C."/>
        </authorList>
    </citation>
    <scope>NUCLEOTIDE SEQUENCE [LARGE SCALE GENOMIC DNA]</scope>
    <source>
        <strain>California kid / ATCC 27343 / NCTC 10154</strain>
    </source>
</reference>
<reference key="4">
    <citation type="journal article" date="1985" name="Proc. Natl. Acad. Sci. U.S.A.">
        <title>UGA is read as tryptophan in Mycoplasma capricolum.</title>
        <authorList>
            <person name="Yamao F."/>
            <person name="Muto A."/>
            <person name="Kawauchi Y."/>
            <person name="Iwami M."/>
            <person name="Iwagami S."/>
            <person name="Azumi Y."/>
            <person name="Osawa S."/>
        </authorList>
    </citation>
    <scope>NUCLEOTIDE SEQUENCE [GENOMIC DNA] OF 1-117</scope>
</reference>
<dbReference type="EMBL" id="X06414">
    <property type="protein sequence ID" value="CAA29711.1"/>
    <property type="molecule type" value="Genomic_DNA"/>
</dbReference>
<dbReference type="EMBL" id="Z33011">
    <property type="protein sequence ID" value="CAA83693.1"/>
    <property type="molecule type" value="Genomic_DNA"/>
</dbReference>
<dbReference type="EMBL" id="CP000123">
    <property type="protein sequence ID" value="ABC01382.1"/>
    <property type="molecule type" value="Genomic_DNA"/>
</dbReference>
<dbReference type="EMBL" id="K02973">
    <property type="protein sequence ID" value="AAA25439.1"/>
    <property type="molecule type" value="Genomic_DNA"/>
</dbReference>
<dbReference type="PIR" id="S02838">
    <property type="entry name" value="R5YM16"/>
</dbReference>
<dbReference type="RefSeq" id="WP_011387540.1">
    <property type="nucleotide sequence ID" value="NC_007633.1"/>
</dbReference>
<dbReference type="SMR" id="P02415"/>
<dbReference type="GeneID" id="93426140"/>
<dbReference type="KEGG" id="mcp:MCAP_0689"/>
<dbReference type="HOGENOM" id="CLU_078858_2_1_14"/>
<dbReference type="PhylomeDB" id="P02415"/>
<dbReference type="Proteomes" id="UP000001928">
    <property type="component" value="Chromosome"/>
</dbReference>
<dbReference type="GO" id="GO:0022625">
    <property type="term" value="C:cytosolic large ribosomal subunit"/>
    <property type="evidence" value="ECO:0007669"/>
    <property type="project" value="TreeGrafter"/>
</dbReference>
<dbReference type="GO" id="GO:0019843">
    <property type="term" value="F:rRNA binding"/>
    <property type="evidence" value="ECO:0007669"/>
    <property type="project" value="UniProtKB-UniRule"/>
</dbReference>
<dbReference type="GO" id="GO:0003735">
    <property type="term" value="F:structural constituent of ribosome"/>
    <property type="evidence" value="ECO:0007669"/>
    <property type="project" value="InterPro"/>
</dbReference>
<dbReference type="GO" id="GO:0000049">
    <property type="term" value="F:tRNA binding"/>
    <property type="evidence" value="ECO:0007669"/>
    <property type="project" value="UniProtKB-KW"/>
</dbReference>
<dbReference type="GO" id="GO:0006412">
    <property type="term" value="P:translation"/>
    <property type="evidence" value="ECO:0007669"/>
    <property type="project" value="UniProtKB-UniRule"/>
</dbReference>
<dbReference type="CDD" id="cd01433">
    <property type="entry name" value="Ribosomal_L16_L10e"/>
    <property type="match status" value="1"/>
</dbReference>
<dbReference type="FunFam" id="3.90.1170.10:FF:000001">
    <property type="entry name" value="50S ribosomal protein L16"/>
    <property type="match status" value="1"/>
</dbReference>
<dbReference type="Gene3D" id="3.90.1170.10">
    <property type="entry name" value="Ribosomal protein L10e/L16"/>
    <property type="match status" value="1"/>
</dbReference>
<dbReference type="HAMAP" id="MF_01342">
    <property type="entry name" value="Ribosomal_uL16"/>
    <property type="match status" value="1"/>
</dbReference>
<dbReference type="InterPro" id="IPR047873">
    <property type="entry name" value="Ribosomal_uL16"/>
</dbReference>
<dbReference type="InterPro" id="IPR000114">
    <property type="entry name" value="Ribosomal_uL16_bact-type"/>
</dbReference>
<dbReference type="InterPro" id="IPR020798">
    <property type="entry name" value="Ribosomal_uL16_CS"/>
</dbReference>
<dbReference type="InterPro" id="IPR016180">
    <property type="entry name" value="Ribosomal_uL16_dom"/>
</dbReference>
<dbReference type="InterPro" id="IPR036920">
    <property type="entry name" value="Ribosomal_uL16_sf"/>
</dbReference>
<dbReference type="NCBIfam" id="TIGR01164">
    <property type="entry name" value="rplP_bact"/>
    <property type="match status" value="1"/>
</dbReference>
<dbReference type="PANTHER" id="PTHR12220">
    <property type="entry name" value="50S/60S RIBOSOMAL PROTEIN L16"/>
    <property type="match status" value="1"/>
</dbReference>
<dbReference type="PANTHER" id="PTHR12220:SF13">
    <property type="entry name" value="LARGE RIBOSOMAL SUBUNIT PROTEIN UL16M"/>
    <property type="match status" value="1"/>
</dbReference>
<dbReference type="Pfam" id="PF00252">
    <property type="entry name" value="Ribosomal_L16"/>
    <property type="match status" value="1"/>
</dbReference>
<dbReference type="PRINTS" id="PR00060">
    <property type="entry name" value="RIBOSOMALL16"/>
</dbReference>
<dbReference type="SUPFAM" id="SSF54686">
    <property type="entry name" value="Ribosomal protein L16p/L10e"/>
    <property type="match status" value="1"/>
</dbReference>
<dbReference type="PROSITE" id="PS00586">
    <property type="entry name" value="RIBOSOMAL_L16_1"/>
    <property type="match status" value="1"/>
</dbReference>
<dbReference type="PROSITE" id="PS00701">
    <property type="entry name" value="RIBOSOMAL_L16_2"/>
    <property type="match status" value="1"/>
</dbReference>
<proteinExistence type="inferred from homology"/>
<sequence length="137" mass="15799">MLQPKRTKYRKPHRVSYEGKAKGAKEINFGEFGLMALDGAWIDNHQIEAARIAMTRYMKRDGKIWMRIFPHMAMTKKPAEVRMGSGKGNPEKWVAVVKKGTIMFEVAQVNEQVAREALRLAMHKLPIRCKFVKRGEN</sequence>
<comment type="function">
    <text evidence="1">Binds 23S rRNA and is also seen to make contacts with the A and possibly P site tRNAs.</text>
</comment>
<comment type="subunit">
    <text>Part of the 50S ribosomal subunit.</text>
</comment>
<comment type="similarity">
    <text evidence="1">Belongs to the universal ribosomal protein uL16 family.</text>
</comment>